<gene>
    <name evidence="1" type="primary">nrdI</name>
    <name type="ordered locus">SERP0396</name>
</gene>
<dbReference type="EMBL" id="CP000029">
    <property type="protein sequence ID" value="AAW53776.1"/>
    <property type="molecule type" value="Genomic_DNA"/>
</dbReference>
<dbReference type="RefSeq" id="WP_001829589.1">
    <property type="nucleotide sequence ID" value="NC_002976.3"/>
</dbReference>
<dbReference type="SMR" id="Q5HR00"/>
<dbReference type="STRING" id="176279.SERP0396"/>
<dbReference type="GeneID" id="50019341"/>
<dbReference type="KEGG" id="ser:SERP0396"/>
<dbReference type="eggNOG" id="COG1780">
    <property type="taxonomic scope" value="Bacteria"/>
</dbReference>
<dbReference type="HOGENOM" id="CLU_114845_3_0_9"/>
<dbReference type="Proteomes" id="UP000000531">
    <property type="component" value="Chromosome"/>
</dbReference>
<dbReference type="GO" id="GO:0010181">
    <property type="term" value="F:FMN binding"/>
    <property type="evidence" value="ECO:0007669"/>
    <property type="project" value="InterPro"/>
</dbReference>
<dbReference type="GO" id="GO:0036211">
    <property type="term" value="P:protein modification process"/>
    <property type="evidence" value="ECO:0007669"/>
    <property type="project" value="InterPro"/>
</dbReference>
<dbReference type="Gene3D" id="3.40.50.360">
    <property type="match status" value="1"/>
</dbReference>
<dbReference type="HAMAP" id="MF_00128">
    <property type="entry name" value="NrdI"/>
    <property type="match status" value="1"/>
</dbReference>
<dbReference type="InterPro" id="IPR029039">
    <property type="entry name" value="Flavoprotein-like_sf"/>
</dbReference>
<dbReference type="InterPro" id="IPR020852">
    <property type="entry name" value="RNR_Ib_NrdI_bac"/>
</dbReference>
<dbReference type="InterPro" id="IPR004465">
    <property type="entry name" value="RNR_NrdI"/>
</dbReference>
<dbReference type="NCBIfam" id="TIGR00333">
    <property type="entry name" value="nrdI"/>
    <property type="match status" value="1"/>
</dbReference>
<dbReference type="PANTHER" id="PTHR37297">
    <property type="entry name" value="PROTEIN NRDI"/>
    <property type="match status" value="1"/>
</dbReference>
<dbReference type="PANTHER" id="PTHR37297:SF1">
    <property type="entry name" value="PROTEIN NRDI"/>
    <property type="match status" value="1"/>
</dbReference>
<dbReference type="Pfam" id="PF07972">
    <property type="entry name" value="Flavodoxin_NdrI"/>
    <property type="match status" value="1"/>
</dbReference>
<dbReference type="PIRSF" id="PIRSF005087">
    <property type="entry name" value="NrdI"/>
    <property type="match status" value="1"/>
</dbReference>
<dbReference type="SUPFAM" id="SSF52218">
    <property type="entry name" value="Flavoproteins"/>
    <property type="match status" value="1"/>
</dbReference>
<proteinExistence type="inferred from homology"/>
<feature type="chain" id="PRO_0000164342" description="Protein NrdI">
    <location>
        <begin position="1"/>
        <end position="132"/>
    </location>
</feature>
<reference key="1">
    <citation type="journal article" date="2005" name="J. Bacteriol.">
        <title>Insights on evolution of virulence and resistance from the complete genome analysis of an early methicillin-resistant Staphylococcus aureus strain and a biofilm-producing methicillin-resistant Staphylococcus epidermidis strain.</title>
        <authorList>
            <person name="Gill S.R."/>
            <person name="Fouts D.E."/>
            <person name="Archer G.L."/>
            <person name="Mongodin E.F."/>
            <person name="DeBoy R.T."/>
            <person name="Ravel J."/>
            <person name="Paulsen I.T."/>
            <person name="Kolonay J.F."/>
            <person name="Brinkac L.M."/>
            <person name="Beanan M.J."/>
            <person name="Dodson R.J."/>
            <person name="Daugherty S.C."/>
            <person name="Madupu R."/>
            <person name="Angiuoli S.V."/>
            <person name="Durkin A.S."/>
            <person name="Haft D.H."/>
            <person name="Vamathevan J.J."/>
            <person name="Khouri H."/>
            <person name="Utterback T.R."/>
            <person name="Lee C."/>
            <person name="Dimitrov G."/>
            <person name="Jiang L."/>
            <person name="Qin H."/>
            <person name="Weidman J."/>
            <person name="Tran K."/>
            <person name="Kang K.H."/>
            <person name="Hance I.R."/>
            <person name="Nelson K.E."/>
            <person name="Fraser C.M."/>
        </authorList>
    </citation>
    <scope>NUCLEOTIDE SEQUENCE [LARGE SCALE GENOMIC DNA]</scope>
    <source>
        <strain>ATCC 35984 / DSM 28319 / BCRC 17069 / CCUG 31568 / BM 3577 / RP62A</strain>
    </source>
</reference>
<protein>
    <recommendedName>
        <fullName evidence="1">Protein NrdI</fullName>
    </recommendedName>
</protein>
<accession>Q5HR00</accession>
<keyword id="KW-1185">Reference proteome</keyword>
<evidence type="ECO:0000255" key="1">
    <source>
        <dbReference type="HAMAP-Rule" id="MF_00128"/>
    </source>
</evidence>
<organism>
    <name type="scientific">Staphylococcus epidermidis (strain ATCC 35984 / DSM 28319 / BCRC 17069 / CCUG 31568 / BM 3577 / RP62A)</name>
    <dbReference type="NCBI Taxonomy" id="176279"/>
    <lineage>
        <taxon>Bacteria</taxon>
        <taxon>Bacillati</taxon>
        <taxon>Bacillota</taxon>
        <taxon>Bacilli</taxon>
        <taxon>Bacillales</taxon>
        <taxon>Staphylococcaceae</taxon>
        <taxon>Staphylococcus</taxon>
    </lineage>
</organism>
<name>NRDI_STAEQ</name>
<sequence>MKVVYYSFSGNVRRFISRAGIKDTFEITQDNCNESVNEPYILVTGTIGFGEVPQPVQSFLNVNHTQLQAVAASGNRNWGQNFAKAGHTISEEYKVPLMMKFEVQGTNKDIIEFKDKVGNFNENHGRKEIQSY</sequence>
<comment type="function">
    <text evidence="1">Probably involved in ribonucleotide reductase function.</text>
</comment>
<comment type="similarity">
    <text evidence="1">Belongs to the NrdI family.</text>
</comment>